<reference key="1">
    <citation type="journal article" date="2007" name="PLoS ONE">
        <title>Analysis of the neurotoxin complex genes in Clostridium botulinum A1-A4 and B1 strains: BoNT/A3, /Ba4 and /B1 clusters are located within plasmids.</title>
        <authorList>
            <person name="Smith T.J."/>
            <person name="Hill K.K."/>
            <person name="Foley B.T."/>
            <person name="Detter J.C."/>
            <person name="Munk A.C."/>
            <person name="Bruce D.C."/>
            <person name="Doggett N.A."/>
            <person name="Smith L.A."/>
            <person name="Marks J.D."/>
            <person name="Xie G."/>
            <person name="Brettin T.S."/>
        </authorList>
    </citation>
    <scope>NUCLEOTIDE SEQUENCE [LARGE SCALE GENOMIC DNA]</scope>
    <source>
        <strain>ATCC 19397 / Type A</strain>
    </source>
</reference>
<accession>A7FR34</accession>
<proteinExistence type="inferred from homology"/>
<sequence>MKKVIIYTDGACRGNGQENTIGAYGIVLMYGEHKKEIKKAFRDTTNNIMELSAVVEALSLLKEPCSIELYSDSAYVINAINQKWLDNWKKNNWKTASKSPVKNKELWEKLDELLKKHSVKFIKVKGHSDNEYNNRCDKLANEAMDEFNV</sequence>
<dbReference type="EC" id="3.1.26.4" evidence="1"/>
<dbReference type="EMBL" id="CP000726">
    <property type="protein sequence ID" value="ABS32346.1"/>
    <property type="molecule type" value="Genomic_DNA"/>
</dbReference>
<dbReference type="RefSeq" id="WP_011948171.1">
    <property type="nucleotide sequence ID" value="NC_009697.1"/>
</dbReference>
<dbReference type="SMR" id="A7FR34"/>
<dbReference type="GeneID" id="5184657"/>
<dbReference type="KEGG" id="cba:CLB_0424"/>
<dbReference type="HOGENOM" id="CLU_030894_6_2_9"/>
<dbReference type="GO" id="GO:0005737">
    <property type="term" value="C:cytoplasm"/>
    <property type="evidence" value="ECO:0007669"/>
    <property type="project" value="UniProtKB-SubCell"/>
</dbReference>
<dbReference type="GO" id="GO:0000287">
    <property type="term" value="F:magnesium ion binding"/>
    <property type="evidence" value="ECO:0007669"/>
    <property type="project" value="UniProtKB-UniRule"/>
</dbReference>
<dbReference type="GO" id="GO:0003676">
    <property type="term" value="F:nucleic acid binding"/>
    <property type="evidence" value="ECO:0007669"/>
    <property type="project" value="InterPro"/>
</dbReference>
<dbReference type="GO" id="GO:0004523">
    <property type="term" value="F:RNA-DNA hybrid ribonuclease activity"/>
    <property type="evidence" value="ECO:0007669"/>
    <property type="project" value="UniProtKB-UniRule"/>
</dbReference>
<dbReference type="GO" id="GO:0043137">
    <property type="term" value="P:DNA replication, removal of RNA primer"/>
    <property type="evidence" value="ECO:0007669"/>
    <property type="project" value="TreeGrafter"/>
</dbReference>
<dbReference type="CDD" id="cd09278">
    <property type="entry name" value="RNase_HI_prokaryote_like"/>
    <property type="match status" value="1"/>
</dbReference>
<dbReference type="FunFam" id="3.30.420.10:FF:000089">
    <property type="entry name" value="Ribonuclease H"/>
    <property type="match status" value="1"/>
</dbReference>
<dbReference type="Gene3D" id="3.30.420.10">
    <property type="entry name" value="Ribonuclease H-like superfamily/Ribonuclease H"/>
    <property type="match status" value="1"/>
</dbReference>
<dbReference type="HAMAP" id="MF_00042">
    <property type="entry name" value="RNase_H"/>
    <property type="match status" value="1"/>
</dbReference>
<dbReference type="InterPro" id="IPR050092">
    <property type="entry name" value="RNase_H"/>
</dbReference>
<dbReference type="InterPro" id="IPR012337">
    <property type="entry name" value="RNaseH-like_sf"/>
</dbReference>
<dbReference type="InterPro" id="IPR002156">
    <property type="entry name" value="RNaseH_domain"/>
</dbReference>
<dbReference type="InterPro" id="IPR036397">
    <property type="entry name" value="RNaseH_sf"/>
</dbReference>
<dbReference type="InterPro" id="IPR022892">
    <property type="entry name" value="RNaseHI"/>
</dbReference>
<dbReference type="NCBIfam" id="NF001236">
    <property type="entry name" value="PRK00203.1"/>
    <property type="match status" value="1"/>
</dbReference>
<dbReference type="PANTHER" id="PTHR10642">
    <property type="entry name" value="RIBONUCLEASE H1"/>
    <property type="match status" value="1"/>
</dbReference>
<dbReference type="PANTHER" id="PTHR10642:SF26">
    <property type="entry name" value="RIBONUCLEASE H1"/>
    <property type="match status" value="1"/>
</dbReference>
<dbReference type="Pfam" id="PF00075">
    <property type="entry name" value="RNase_H"/>
    <property type="match status" value="1"/>
</dbReference>
<dbReference type="SUPFAM" id="SSF53098">
    <property type="entry name" value="Ribonuclease H-like"/>
    <property type="match status" value="1"/>
</dbReference>
<dbReference type="PROSITE" id="PS50879">
    <property type="entry name" value="RNASE_H_1"/>
    <property type="match status" value="1"/>
</dbReference>
<protein>
    <recommendedName>
        <fullName evidence="1">Ribonuclease H</fullName>
        <shortName evidence="1">RNase H</shortName>
        <ecNumber evidence="1">3.1.26.4</ecNumber>
    </recommendedName>
</protein>
<comment type="function">
    <text evidence="1">Endonuclease that specifically degrades the RNA of RNA-DNA hybrids.</text>
</comment>
<comment type="catalytic activity">
    <reaction evidence="1">
        <text>Endonucleolytic cleavage to 5'-phosphomonoester.</text>
        <dbReference type="EC" id="3.1.26.4"/>
    </reaction>
</comment>
<comment type="cofactor">
    <cofactor evidence="1">
        <name>Mg(2+)</name>
        <dbReference type="ChEBI" id="CHEBI:18420"/>
    </cofactor>
    <text evidence="1">Binds 1 Mg(2+) ion per subunit. May bind a second metal ion at a regulatory site, or after substrate binding.</text>
</comment>
<comment type="subunit">
    <text evidence="1">Monomer.</text>
</comment>
<comment type="subcellular location">
    <subcellularLocation>
        <location evidence="1">Cytoplasm</location>
    </subcellularLocation>
</comment>
<comment type="similarity">
    <text evidence="1">Belongs to the RNase H family.</text>
</comment>
<feature type="chain" id="PRO_0000332579" description="Ribonuclease H">
    <location>
        <begin position="1"/>
        <end position="149"/>
    </location>
</feature>
<feature type="domain" description="RNase H type-1" evidence="2">
    <location>
        <begin position="1"/>
        <end position="145"/>
    </location>
</feature>
<feature type="binding site" evidence="1">
    <location>
        <position position="9"/>
    </location>
    <ligand>
        <name>Mg(2+)</name>
        <dbReference type="ChEBI" id="CHEBI:18420"/>
        <label>1</label>
    </ligand>
</feature>
<feature type="binding site" evidence="1">
    <location>
        <position position="9"/>
    </location>
    <ligand>
        <name>Mg(2+)</name>
        <dbReference type="ChEBI" id="CHEBI:18420"/>
        <label>2</label>
    </ligand>
</feature>
<feature type="binding site" evidence="1">
    <location>
        <position position="50"/>
    </location>
    <ligand>
        <name>Mg(2+)</name>
        <dbReference type="ChEBI" id="CHEBI:18420"/>
        <label>1</label>
    </ligand>
</feature>
<feature type="binding site" evidence="1">
    <location>
        <position position="72"/>
    </location>
    <ligand>
        <name>Mg(2+)</name>
        <dbReference type="ChEBI" id="CHEBI:18420"/>
        <label>1</label>
    </ligand>
</feature>
<feature type="binding site" evidence="1">
    <location>
        <position position="137"/>
    </location>
    <ligand>
        <name>Mg(2+)</name>
        <dbReference type="ChEBI" id="CHEBI:18420"/>
        <label>2</label>
    </ligand>
</feature>
<evidence type="ECO:0000255" key="1">
    <source>
        <dbReference type="HAMAP-Rule" id="MF_00042"/>
    </source>
</evidence>
<evidence type="ECO:0000255" key="2">
    <source>
        <dbReference type="PROSITE-ProRule" id="PRU00408"/>
    </source>
</evidence>
<name>RNH_CLOB1</name>
<gene>
    <name evidence="1" type="primary">rnhA</name>
    <name type="ordered locus">CLB_0424</name>
</gene>
<organism>
    <name type="scientific">Clostridium botulinum (strain ATCC 19397 / Type A)</name>
    <dbReference type="NCBI Taxonomy" id="441770"/>
    <lineage>
        <taxon>Bacteria</taxon>
        <taxon>Bacillati</taxon>
        <taxon>Bacillota</taxon>
        <taxon>Clostridia</taxon>
        <taxon>Eubacteriales</taxon>
        <taxon>Clostridiaceae</taxon>
        <taxon>Clostridium</taxon>
    </lineage>
</organism>
<keyword id="KW-0963">Cytoplasm</keyword>
<keyword id="KW-0255">Endonuclease</keyword>
<keyword id="KW-0378">Hydrolase</keyword>
<keyword id="KW-0460">Magnesium</keyword>
<keyword id="KW-0479">Metal-binding</keyword>
<keyword id="KW-0540">Nuclease</keyword>